<accession>P15156</accession>
<dbReference type="EC" id="3.4.21.-"/>
<dbReference type="EMBL" id="X16160">
    <property type="protein sequence ID" value="CAA34286.1"/>
    <property type="molecule type" value="mRNA"/>
</dbReference>
<dbReference type="PIR" id="S05008">
    <property type="entry name" value="S05008"/>
</dbReference>
<dbReference type="RefSeq" id="NP_001268589.1">
    <property type="nucleotide sequence ID" value="NM_001281660.1"/>
</dbReference>
<dbReference type="SMR" id="P15156"/>
<dbReference type="STRING" id="10036.ENSMAUP00000019226"/>
<dbReference type="MEROPS" id="S01.193"/>
<dbReference type="Ensembl" id="ENSMAUT00000023199">
    <property type="protein sequence ID" value="ENSMAUP00000019226"/>
    <property type="gene ID" value="ENSMAUG00000017562"/>
</dbReference>
<dbReference type="GeneID" id="101823163"/>
<dbReference type="KEGG" id="maua:101823163"/>
<dbReference type="CTD" id="716"/>
<dbReference type="eggNOG" id="KOG3627">
    <property type="taxonomic scope" value="Eukaryota"/>
</dbReference>
<dbReference type="OrthoDB" id="9985152at2759"/>
<dbReference type="Proteomes" id="UP000189706">
    <property type="component" value="Unplaced"/>
</dbReference>
<dbReference type="GO" id="GO:0005615">
    <property type="term" value="C:extracellular space"/>
    <property type="evidence" value="ECO:0007669"/>
    <property type="project" value="TreeGrafter"/>
</dbReference>
<dbReference type="GO" id="GO:0005509">
    <property type="term" value="F:calcium ion binding"/>
    <property type="evidence" value="ECO:0007669"/>
    <property type="project" value="InterPro"/>
</dbReference>
<dbReference type="GO" id="GO:0042802">
    <property type="term" value="F:identical protein binding"/>
    <property type="evidence" value="ECO:0007669"/>
    <property type="project" value="Ensembl"/>
</dbReference>
<dbReference type="GO" id="GO:0004252">
    <property type="term" value="F:serine-type endopeptidase activity"/>
    <property type="evidence" value="ECO:0007669"/>
    <property type="project" value="Ensembl"/>
</dbReference>
<dbReference type="GO" id="GO:0006956">
    <property type="term" value="P:complement activation"/>
    <property type="evidence" value="ECO:0007669"/>
    <property type="project" value="InterPro"/>
</dbReference>
<dbReference type="GO" id="GO:0006508">
    <property type="term" value="P:proteolysis"/>
    <property type="evidence" value="ECO:0007669"/>
    <property type="project" value="UniProtKB-KW"/>
</dbReference>
<dbReference type="CDD" id="cd00033">
    <property type="entry name" value="CCP"/>
    <property type="match status" value="2"/>
</dbReference>
<dbReference type="CDD" id="cd00041">
    <property type="entry name" value="CUB"/>
    <property type="match status" value="2"/>
</dbReference>
<dbReference type="CDD" id="cd00054">
    <property type="entry name" value="EGF_CA"/>
    <property type="match status" value="1"/>
</dbReference>
<dbReference type="CDD" id="cd00190">
    <property type="entry name" value="Tryp_SPc"/>
    <property type="match status" value="1"/>
</dbReference>
<dbReference type="FunFam" id="2.10.70.10:FF:000049">
    <property type="entry name" value="Complement C1s subcomponent"/>
    <property type="match status" value="1"/>
</dbReference>
<dbReference type="FunFam" id="2.40.10.10:FF:000059">
    <property type="entry name" value="Complement C1s subcomponent"/>
    <property type="match status" value="1"/>
</dbReference>
<dbReference type="FunFam" id="2.40.10.10:FF:000067">
    <property type="entry name" value="Complement C1s subcomponent"/>
    <property type="match status" value="1"/>
</dbReference>
<dbReference type="FunFam" id="2.60.120.290:FF:000034">
    <property type="entry name" value="complement C1s subcomponent"/>
    <property type="match status" value="1"/>
</dbReference>
<dbReference type="FunFam" id="2.10.25.10:FF:000059">
    <property type="entry name" value="Mannan-binding lectin serine protease 1"/>
    <property type="match status" value="1"/>
</dbReference>
<dbReference type="FunFam" id="2.10.70.10:FF:000016">
    <property type="entry name" value="Mannan-binding lectin serine protease 1"/>
    <property type="match status" value="1"/>
</dbReference>
<dbReference type="FunFam" id="2.60.120.290:FF:000006">
    <property type="entry name" value="Mannan-binding lectin serine protease 1"/>
    <property type="match status" value="1"/>
</dbReference>
<dbReference type="Gene3D" id="2.10.70.10">
    <property type="entry name" value="Complement Module, domain 1"/>
    <property type="match status" value="2"/>
</dbReference>
<dbReference type="Gene3D" id="2.10.25.10">
    <property type="entry name" value="Laminin"/>
    <property type="match status" value="1"/>
</dbReference>
<dbReference type="Gene3D" id="2.60.120.290">
    <property type="entry name" value="Spermadhesin, CUB domain"/>
    <property type="match status" value="2"/>
</dbReference>
<dbReference type="Gene3D" id="2.40.10.10">
    <property type="entry name" value="Trypsin-like serine proteases"/>
    <property type="match status" value="2"/>
</dbReference>
<dbReference type="InterPro" id="IPR000859">
    <property type="entry name" value="CUB_dom"/>
</dbReference>
<dbReference type="InterPro" id="IPR001881">
    <property type="entry name" value="EGF-like_Ca-bd_dom"/>
</dbReference>
<dbReference type="InterPro" id="IPR018097">
    <property type="entry name" value="EGF_Ca-bd_CS"/>
</dbReference>
<dbReference type="InterPro" id="IPR024175">
    <property type="entry name" value="Pept_S1A_C1r/C1S/mannan-bd"/>
</dbReference>
<dbReference type="InterPro" id="IPR009003">
    <property type="entry name" value="Peptidase_S1_PA"/>
</dbReference>
<dbReference type="InterPro" id="IPR043504">
    <property type="entry name" value="Peptidase_S1_PA_chymotrypsin"/>
</dbReference>
<dbReference type="InterPro" id="IPR001314">
    <property type="entry name" value="Peptidase_S1A"/>
</dbReference>
<dbReference type="InterPro" id="IPR035914">
    <property type="entry name" value="Sperma_CUB_dom_sf"/>
</dbReference>
<dbReference type="InterPro" id="IPR035976">
    <property type="entry name" value="Sushi/SCR/CCP_sf"/>
</dbReference>
<dbReference type="InterPro" id="IPR000436">
    <property type="entry name" value="Sushi_SCR_CCP_dom"/>
</dbReference>
<dbReference type="InterPro" id="IPR001254">
    <property type="entry name" value="Trypsin_dom"/>
</dbReference>
<dbReference type="InterPro" id="IPR033116">
    <property type="entry name" value="TRYPSIN_SER"/>
</dbReference>
<dbReference type="PANTHER" id="PTHR24255:SF18">
    <property type="entry name" value="COMPLEMENT C1S SUBCOMPONENT"/>
    <property type="match status" value="1"/>
</dbReference>
<dbReference type="PANTHER" id="PTHR24255">
    <property type="entry name" value="COMPLEMENT COMPONENT 1, S SUBCOMPONENT-RELATED"/>
    <property type="match status" value="1"/>
</dbReference>
<dbReference type="Pfam" id="PF00431">
    <property type="entry name" value="CUB"/>
    <property type="match status" value="2"/>
</dbReference>
<dbReference type="Pfam" id="PF14670">
    <property type="entry name" value="FXa_inhibition"/>
    <property type="match status" value="1"/>
</dbReference>
<dbReference type="Pfam" id="PF00084">
    <property type="entry name" value="Sushi"/>
    <property type="match status" value="2"/>
</dbReference>
<dbReference type="Pfam" id="PF00089">
    <property type="entry name" value="Trypsin"/>
    <property type="match status" value="1"/>
</dbReference>
<dbReference type="PIRSF" id="PIRSF001155">
    <property type="entry name" value="C1r_C1s_MASP"/>
    <property type="match status" value="1"/>
</dbReference>
<dbReference type="PRINTS" id="PR00722">
    <property type="entry name" value="CHYMOTRYPSIN"/>
</dbReference>
<dbReference type="SMART" id="SM00032">
    <property type="entry name" value="CCP"/>
    <property type="match status" value="2"/>
</dbReference>
<dbReference type="SMART" id="SM00042">
    <property type="entry name" value="CUB"/>
    <property type="match status" value="2"/>
</dbReference>
<dbReference type="SMART" id="SM00179">
    <property type="entry name" value="EGF_CA"/>
    <property type="match status" value="1"/>
</dbReference>
<dbReference type="SMART" id="SM00020">
    <property type="entry name" value="Tryp_SPc"/>
    <property type="match status" value="1"/>
</dbReference>
<dbReference type="SUPFAM" id="SSF57535">
    <property type="entry name" value="Complement control module/SCR domain"/>
    <property type="match status" value="2"/>
</dbReference>
<dbReference type="SUPFAM" id="SSF57196">
    <property type="entry name" value="EGF/Laminin"/>
    <property type="match status" value="1"/>
</dbReference>
<dbReference type="SUPFAM" id="SSF49854">
    <property type="entry name" value="Spermadhesin, CUB domain"/>
    <property type="match status" value="2"/>
</dbReference>
<dbReference type="SUPFAM" id="SSF50494">
    <property type="entry name" value="Trypsin-like serine proteases"/>
    <property type="match status" value="1"/>
</dbReference>
<dbReference type="PROSITE" id="PS00010">
    <property type="entry name" value="ASX_HYDROXYL"/>
    <property type="match status" value="1"/>
</dbReference>
<dbReference type="PROSITE" id="PS01180">
    <property type="entry name" value="CUB"/>
    <property type="match status" value="2"/>
</dbReference>
<dbReference type="PROSITE" id="PS01187">
    <property type="entry name" value="EGF_CA"/>
    <property type="match status" value="1"/>
</dbReference>
<dbReference type="PROSITE" id="PS50923">
    <property type="entry name" value="SUSHI"/>
    <property type="match status" value="2"/>
</dbReference>
<dbReference type="PROSITE" id="PS50240">
    <property type="entry name" value="TRYPSIN_DOM"/>
    <property type="match status" value="1"/>
</dbReference>
<dbReference type="PROSITE" id="PS00135">
    <property type="entry name" value="TRYPSIN_SER"/>
    <property type="match status" value="1"/>
</dbReference>
<sequence>MGKSSEAWCIVLFSVFASFSAEPTMHGEILSPNYPQAYPNEMEKTWDIEVPEGFGVRLYFTHLDMELSENCEYDSVQIISGGVEEGRLCGQRTSKNANSPIVEEFQIPYNKLQVIFRSDFSNEERFTGFAAYYAAIDVNECTDFTDVPCSHFCNNFIGGYFCSCPPEYFLHDDMRNCGVNCSGNVFTALIGEISSPNYPNPYPENSRCEYQILLEEGFQVVVTIQREDFDVEPADSQGNCQDSLLFAAKNRQFGPFCGNGFPGPLTIETHSNTLDIVFQTDLTEQKKGWKLRYHGDPIPCPKEITANSVWAPEKAKYVFKDVVKISCVDGFEAVEGNVGSTFFYSTCQSNGQWSNSRLRCQPVDCGIPEPIQNGKVDDPENTLFGSVIHYSCEEPYYYMEHAEHGGEYRCAANGSWVNDELGIELPKCVPVCGVPTEPFRIQQRIFGGFPAKIQSFPWQVFFEFPRAGGALIGEHWVLTAAHVVEGNSDPSMYVGSTSVRMENLANVQKLTTDRVIIHPGWKPGDDLSTRTNFDNDIALVRLKDPVKMGPTVSPICLPGTSSEYEPSEGDLGLISGWGRTERRNIVIQLRGAKLPVTSLEKCRQVKEENPKARADDYVFTSNMICAGEKGVDSCQGDSGGAFALPVPNVRDPKFYVAGLVSWGKKCGTYGIYTKVKNYKDWILQTMQENSVPSQD</sequence>
<reference key="1">
    <citation type="journal article" date="1989" name="FEBS Lett.">
        <title>Complete primary structure of calcium-dependent serine proteinase capable of degrading extracellular matrix proteins.</title>
        <authorList>
            <person name="Kinoshita H."/>
            <person name="Sakiyama H."/>
            <person name="Tokunaga K."/>
            <person name="Imajoh-Ohmi S."/>
            <person name="Hamada Y."/>
            <person name="Isono K."/>
            <person name="Sakiyama S."/>
        </authorList>
    </citation>
    <scope>NUCLEOTIDE SEQUENCE [MRNA]</scope>
    <scope>PROTEIN SEQUENCE OF 22-50 AND 446-472</scope>
    <source>
        <tissue>Fibroblast</tissue>
    </source>
</reference>
<feature type="signal peptide" evidence="6">
    <location>
        <begin position="1"/>
        <end position="21"/>
    </location>
</feature>
<feature type="chain" id="PRO_0000027589" description="Calcium-dependent serine proteinase">
    <location>
        <begin position="22"/>
        <end position="695"/>
    </location>
</feature>
<feature type="chain" id="PRO_0000027590" description="Calcium-dependent serine proteinase heavy chain">
    <location>
        <begin position="22"/>
        <end position="444"/>
    </location>
</feature>
<feature type="chain" id="PRO_0000027591" description="Calcium-dependent serine proteinase light chain">
    <location>
        <begin position="445"/>
        <end position="695"/>
    </location>
</feature>
<feature type="domain" description="CUB 1" evidence="3">
    <location>
        <begin position="22"/>
        <end position="136"/>
    </location>
</feature>
<feature type="domain" description="EGF-like; calcium-binding" evidence="2">
    <location>
        <begin position="137"/>
        <end position="178"/>
    </location>
</feature>
<feature type="domain" description="CUB 2" evidence="3">
    <location>
        <begin position="181"/>
        <end position="296"/>
    </location>
</feature>
<feature type="domain" description="Sushi 1" evidence="5">
    <location>
        <begin position="298"/>
        <end position="362"/>
    </location>
</feature>
<feature type="domain" description="Sushi 2" evidence="5">
    <location>
        <begin position="363"/>
        <end position="430"/>
    </location>
</feature>
<feature type="domain" description="Peptidase S1" evidence="4">
    <location>
        <begin position="445"/>
        <end position="687"/>
    </location>
</feature>
<feature type="active site" description="Charge relay system" evidence="1">
    <location>
        <position position="482"/>
    </location>
</feature>
<feature type="active site" description="Charge relay system" evidence="1">
    <location>
        <position position="536"/>
    </location>
</feature>
<feature type="active site" description="Charge relay system" evidence="1">
    <location>
        <position position="638"/>
    </location>
</feature>
<feature type="modified residue" description="(3R)-3-hydroxyasparagine" evidence="2">
    <location>
        <position position="155"/>
    </location>
</feature>
<feature type="glycosylation site" description="N-linked (GlcNAc...) asparagine" evidence="2">
    <location>
        <position position="180"/>
    </location>
</feature>
<feature type="glycosylation site" description="N-linked (GlcNAc...) asparagine" evidence="2">
    <location>
        <position position="413"/>
    </location>
</feature>
<feature type="disulfide bond" evidence="1">
    <location>
        <begin position="71"/>
        <end position="89"/>
    </location>
</feature>
<feature type="disulfide bond" evidence="1">
    <location>
        <begin position="141"/>
        <end position="153"/>
    </location>
</feature>
<feature type="disulfide bond" evidence="1">
    <location>
        <begin position="149"/>
        <end position="162"/>
    </location>
</feature>
<feature type="disulfide bond" evidence="1">
    <location>
        <begin position="164"/>
        <end position="177"/>
    </location>
</feature>
<feature type="disulfide bond" evidence="1">
    <location>
        <begin position="181"/>
        <end position="208"/>
    </location>
</feature>
<feature type="disulfide bond" evidence="1">
    <location>
        <begin position="240"/>
        <end position="257"/>
    </location>
</feature>
<feature type="disulfide bond" evidence="1">
    <location>
        <begin position="300"/>
        <end position="347"/>
    </location>
</feature>
<feature type="disulfide bond" evidence="1">
    <location>
        <begin position="327"/>
        <end position="360"/>
    </location>
</feature>
<feature type="disulfide bond" evidence="1">
    <location>
        <begin position="365"/>
        <end position="410"/>
    </location>
</feature>
<feature type="disulfide bond" evidence="1">
    <location>
        <begin position="392"/>
        <end position="428"/>
    </location>
</feature>
<feature type="disulfide bond" evidence="1">
    <location>
        <begin position="602"/>
        <end position="625"/>
    </location>
</feature>
<feature type="disulfide bond" evidence="1">
    <location>
        <begin position="634"/>
        <end position="666"/>
    </location>
</feature>
<comment type="function">
    <text>Capable of degrading extracellular matrix proteins. CASP degrades type I and IV collagen and fibronectin in the presence of calcium.</text>
</comment>
<comment type="subunit">
    <text>Heterodimer, consisting of heavy and light chains with disulfide bonds. The heavy chain is expected to be a regulatory subunit and the light chain contains the catalytic site.</text>
</comment>
<comment type="subcellular location">
    <subcellularLocation>
        <location>Secreted</location>
        <location>Extracellular space</location>
        <location>Extracellular matrix</location>
    </subcellularLocation>
</comment>
<comment type="PTM">
    <text evidence="1">The iron and 2-oxoglutarate dependent 3-hydroxylation of aspartate and asparagine is (R) stereospecific within EGF domains.</text>
</comment>
<comment type="similarity">
    <text evidence="4">Belongs to the peptidase S1 family.</text>
</comment>
<proteinExistence type="evidence at protein level"/>
<organism>
    <name type="scientific">Mesocricetus auratus</name>
    <name type="common">Golden hamster</name>
    <dbReference type="NCBI Taxonomy" id="10036"/>
    <lineage>
        <taxon>Eukaryota</taxon>
        <taxon>Metazoa</taxon>
        <taxon>Chordata</taxon>
        <taxon>Craniata</taxon>
        <taxon>Vertebrata</taxon>
        <taxon>Euteleostomi</taxon>
        <taxon>Mammalia</taxon>
        <taxon>Eutheria</taxon>
        <taxon>Euarchontoglires</taxon>
        <taxon>Glires</taxon>
        <taxon>Rodentia</taxon>
        <taxon>Myomorpha</taxon>
        <taxon>Muroidea</taxon>
        <taxon>Cricetidae</taxon>
        <taxon>Cricetinae</taxon>
        <taxon>Mesocricetus</taxon>
    </lineage>
</organism>
<name>CASP_MESAU</name>
<evidence type="ECO:0000250" key="1"/>
<evidence type="ECO:0000255" key="2"/>
<evidence type="ECO:0000255" key="3">
    <source>
        <dbReference type="PROSITE-ProRule" id="PRU00059"/>
    </source>
</evidence>
<evidence type="ECO:0000255" key="4">
    <source>
        <dbReference type="PROSITE-ProRule" id="PRU00274"/>
    </source>
</evidence>
<evidence type="ECO:0000255" key="5">
    <source>
        <dbReference type="PROSITE-ProRule" id="PRU00302"/>
    </source>
</evidence>
<evidence type="ECO:0000269" key="6">
    <source>
    </source>
</evidence>
<keyword id="KW-0106">Calcium</keyword>
<keyword id="KW-0903">Direct protein sequencing</keyword>
<keyword id="KW-1015">Disulfide bond</keyword>
<keyword id="KW-0245">EGF-like domain</keyword>
<keyword id="KW-0272">Extracellular matrix</keyword>
<keyword id="KW-0325">Glycoprotein</keyword>
<keyword id="KW-0378">Hydrolase</keyword>
<keyword id="KW-0379">Hydroxylation</keyword>
<keyword id="KW-0645">Protease</keyword>
<keyword id="KW-1185">Reference proteome</keyword>
<keyword id="KW-0677">Repeat</keyword>
<keyword id="KW-0964">Secreted</keyword>
<keyword id="KW-0720">Serine protease</keyword>
<keyword id="KW-0732">Signal</keyword>
<keyword id="KW-0768">Sushi</keyword>
<protein>
    <recommendedName>
        <fullName>Calcium-dependent serine proteinase</fullName>
        <shortName>CASP</shortName>
        <ecNumber>3.4.21.-</ecNumber>
    </recommendedName>
    <component>
        <recommendedName>
            <fullName>Calcium-dependent serine proteinase heavy chain</fullName>
        </recommendedName>
    </component>
    <component>
        <recommendedName>
            <fullName>Calcium-dependent serine proteinase light chain</fullName>
        </recommendedName>
    </component>
</protein>